<feature type="chain" id="PRO_0000278705" description="Protein PB1-F2">
    <location>
        <begin position="1"/>
        <end position="90"/>
    </location>
</feature>
<feature type="region of interest" description="Disordered" evidence="2">
    <location>
        <begin position="1"/>
        <end position="28"/>
    </location>
</feature>
<feature type="region of interest" description="Mitochondrial targeting sequence" evidence="1">
    <location>
        <begin position="65"/>
        <end position="87"/>
    </location>
</feature>
<feature type="site" description="Low pathogenicity" evidence="1">
    <location>
        <position position="66"/>
    </location>
</feature>
<proteinExistence type="inferred from homology"/>
<accession>Q0A2Q5</accession>
<comment type="function">
    <text evidence="1">Plays an important role in promoting lung pathology in both primary viral infection and secondary bacterial infection. Promotes alteration of mitochondrial morphology, dissipation of mitochondrial membrane potential, and cell death. Alternatively, inhibits the production of interferon in the infected cell at the level of host mitochondrial antiviral signaling MAVS. Its level of expression differs greatly depending on which cell type is infected, in a manner that is independent of the levels of expression of other viral proteins. Monocytic cells are more affected than epithelial cells. Seems to disable virus-infected monocytes or other host innate immune cells. During early stage of infection, predisposes the mitochondria to permeability transition through interaction with host SLC25A6/ANT3 and VDAC1. These proteins participate in the formation of the permeability transition pore complex (PTPC) responsible of the release of mitochondrial products that triggers apoptosis.</text>
</comment>
<comment type="subunit">
    <text evidence="1">Oligomer. Interacts with human SLC25A6/ANT3 and VDAC1. Interacts with host MAVS.</text>
</comment>
<comment type="subcellular location">
    <subcellularLocation>
        <location evidence="1">Host mitochondrion inner membrane</location>
    </subcellularLocation>
    <subcellularLocation>
        <location evidence="1">Host nucleus</location>
    </subcellularLocation>
    <subcellularLocation>
        <location evidence="1">Host cytoplasm</location>
        <location evidence="1">Host cytosol</location>
    </subcellularLocation>
    <text evidence="1">Inner mitochondrial membrane in most cells types. Otherwise is detected in the nucleus and cytosol.</text>
</comment>
<comment type="miscellaneous">
    <text>Is not encoded in all strains, and seems to be dispensable for replication.</text>
</comment>
<comment type="similarity">
    <text evidence="1">Belongs to the influenza viruses PB1-F2 family.</text>
</comment>
<evidence type="ECO:0000255" key="1">
    <source>
        <dbReference type="HAMAP-Rule" id="MF_04064"/>
    </source>
</evidence>
<evidence type="ECO:0000256" key="2">
    <source>
        <dbReference type="SAM" id="MobiDB-lite"/>
    </source>
</evidence>
<organismHost>
    <name type="scientific">Aves</name>
    <dbReference type="NCBI Taxonomy" id="8782"/>
</organismHost>
<organismHost>
    <name type="scientific">Equus caballus</name>
    <name type="common">Horse</name>
    <dbReference type="NCBI Taxonomy" id="9796"/>
</organismHost>
<organismHost>
    <name type="scientific">Homo sapiens</name>
    <name type="common">Human</name>
    <dbReference type="NCBI Taxonomy" id="9606"/>
</organismHost>
<organismHost>
    <name type="scientific">Phocidae</name>
    <name type="common">true seals</name>
    <dbReference type="NCBI Taxonomy" id="9709"/>
</organismHost>
<dbReference type="EMBL" id="CY015025">
    <property type="protein sequence ID" value="ABI85027.1"/>
    <property type="molecule type" value="Genomic_RNA"/>
</dbReference>
<dbReference type="SMR" id="Q0A2Q5"/>
<dbReference type="GO" id="GO:0044164">
    <property type="term" value="C:host cell cytosol"/>
    <property type="evidence" value="ECO:0007669"/>
    <property type="project" value="UniProtKB-SubCell"/>
</dbReference>
<dbReference type="GO" id="GO:0044192">
    <property type="term" value="C:host cell mitochondrial inner membrane"/>
    <property type="evidence" value="ECO:0007669"/>
    <property type="project" value="UniProtKB-SubCell"/>
</dbReference>
<dbReference type="GO" id="GO:0042025">
    <property type="term" value="C:host cell nucleus"/>
    <property type="evidence" value="ECO:0007669"/>
    <property type="project" value="UniProtKB-SubCell"/>
</dbReference>
<dbReference type="GO" id="GO:0016020">
    <property type="term" value="C:membrane"/>
    <property type="evidence" value="ECO:0007669"/>
    <property type="project" value="UniProtKB-UniRule"/>
</dbReference>
<dbReference type="GO" id="GO:0052150">
    <property type="term" value="P:symbiont-mediated perturbation of host apoptosis"/>
    <property type="evidence" value="ECO:0007669"/>
    <property type="project" value="UniProtKB-KW"/>
</dbReference>
<dbReference type="GO" id="GO:0039545">
    <property type="term" value="P:symbiont-mediated suppression of host cytoplasmic pattern recognition receptor signaling pathway via inhibition of MAVS activity"/>
    <property type="evidence" value="ECO:0007669"/>
    <property type="project" value="UniProtKB-KW"/>
</dbReference>
<dbReference type="HAMAP" id="MF_04064">
    <property type="entry name" value="INFV_PB1F2"/>
    <property type="match status" value="1"/>
</dbReference>
<dbReference type="InterPro" id="IPR021045">
    <property type="entry name" value="Flu_proapoptotic_PB1-F2"/>
</dbReference>
<dbReference type="Pfam" id="PF11986">
    <property type="entry name" value="PB1-F2"/>
    <property type="match status" value="1"/>
</dbReference>
<gene>
    <name evidence="1" type="primary">PB1</name>
</gene>
<protein>
    <recommendedName>
        <fullName evidence="1">Protein PB1-F2</fullName>
    </recommendedName>
</protein>
<name>PB1F2_I85A3</name>
<organism>
    <name type="scientific">Influenza A virus (strain A/Chicken/Victoria/1/1985 H7N7)</name>
    <dbReference type="NCBI Taxonomy" id="402520"/>
    <lineage>
        <taxon>Viruses</taxon>
        <taxon>Riboviria</taxon>
        <taxon>Orthornavirae</taxon>
        <taxon>Negarnaviricota</taxon>
        <taxon>Polyploviricotina</taxon>
        <taxon>Insthoviricetes</taxon>
        <taxon>Articulavirales</taxon>
        <taxon>Orthomyxoviridae</taxon>
        <taxon>Alphainfluenzavirus</taxon>
        <taxon>Alphainfluenzavirus influenzae</taxon>
        <taxon>Influenza A virus</taxon>
    </lineage>
</organism>
<reference key="1">
    <citation type="journal article" date="2006" name="Science">
        <title>Large-scale sequence analysis of avian influenza isolates.</title>
        <authorList>
            <person name="Obenauer J.C."/>
            <person name="Denson J."/>
            <person name="Mehta P.K."/>
            <person name="Su X."/>
            <person name="Mukatira S."/>
            <person name="Finkelstein D.B."/>
            <person name="Xu X."/>
            <person name="Wang J."/>
            <person name="Ma J."/>
            <person name="Fan Y."/>
            <person name="Rakestraw K.M."/>
            <person name="Webster R.G."/>
            <person name="Hoffmann E."/>
            <person name="Krauss S."/>
            <person name="Zheng J."/>
            <person name="Zhang Z."/>
            <person name="Naeve C.W."/>
        </authorList>
    </citation>
    <scope>NUCLEOTIDE SEQUENCE [GENOMIC RNA]</scope>
</reference>
<keyword id="KW-0053">Apoptosis</keyword>
<keyword id="KW-1035">Host cytoplasm</keyword>
<keyword id="KW-1043">Host membrane</keyword>
<keyword id="KW-1045">Host mitochondrion</keyword>
<keyword id="KW-1046">Host mitochondrion inner membrane</keyword>
<keyword id="KW-1048">Host nucleus</keyword>
<keyword id="KW-0945">Host-virus interaction</keyword>
<keyword id="KW-1090">Inhibition of host innate immune response by virus</keyword>
<keyword id="KW-1097">Inhibition of host MAVS by virus</keyword>
<keyword id="KW-1113">Inhibition of host RLR pathway by virus</keyword>
<keyword id="KW-0472">Membrane</keyword>
<keyword id="KW-1119">Modulation of host cell apoptosis by virus</keyword>
<keyword id="KW-0899">Viral immunoevasion</keyword>
<sequence>MEQEQDTPWTQSTEHINIQKKGNGQQTQRLEHLNSTQLTDHYLKIMSQADMHRQTVYWKQWLSLKNLTQGSLKTHVLKRWKLFSRQEWIN</sequence>